<feature type="chain" id="PRO_1000196276" description="Large ribosomal subunit protein bL9">
    <location>
        <begin position="1"/>
        <end position="184"/>
    </location>
</feature>
<feature type="region of interest" description="Disordered" evidence="2">
    <location>
        <begin position="160"/>
        <end position="184"/>
    </location>
</feature>
<feature type="compositionally biased region" description="Basic and acidic residues" evidence="2">
    <location>
        <begin position="173"/>
        <end position="184"/>
    </location>
</feature>
<gene>
    <name evidence="1" type="primary">rplI</name>
    <name type="ordered locus">WRi_006250</name>
</gene>
<reference key="1">
    <citation type="journal article" date="2009" name="Proc. Natl. Acad. Sci. U.S.A.">
        <title>The mosaic genome structure of the Wolbachia wRi strain infecting Drosophila simulans.</title>
        <authorList>
            <person name="Klasson L."/>
            <person name="Westberg J."/>
            <person name="Sapountzis P."/>
            <person name="Naeslund K."/>
            <person name="Lutnaes Y."/>
            <person name="Darby A.C."/>
            <person name="Veneti Z."/>
            <person name="Chen L."/>
            <person name="Braig H.R."/>
            <person name="Garrett R."/>
            <person name="Bourtzis K."/>
            <person name="Andersson S.G."/>
        </authorList>
    </citation>
    <scope>NUCLEOTIDE SEQUENCE [LARGE SCALE GENOMIC DNA]</scope>
    <source>
        <strain>wRi</strain>
    </source>
</reference>
<keyword id="KW-0687">Ribonucleoprotein</keyword>
<keyword id="KW-0689">Ribosomal protein</keyword>
<keyword id="KW-0694">RNA-binding</keyword>
<keyword id="KW-0699">rRNA-binding</keyword>
<evidence type="ECO:0000255" key="1">
    <source>
        <dbReference type="HAMAP-Rule" id="MF_00503"/>
    </source>
</evidence>
<evidence type="ECO:0000256" key="2">
    <source>
        <dbReference type="SAM" id="MobiDB-lite"/>
    </source>
</evidence>
<evidence type="ECO:0000305" key="3"/>
<dbReference type="EMBL" id="CP001391">
    <property type="protein sequence ID" value="ACN95396.1"/>
    <property type="molecule type" value="Genomic_DNA"/>
</dbReference>
<dbReference type="RefSeq" id="WP_007548891.1">
    <property type="nucleotide sequence ID" value="NZ_MKIF01000018.1"/>
</dbReference>
<dbReference type="SMR" id="C0R3A4"/>
<dbReference type="STRING" id="66084.WRi_006250"/>
<dbReference type="KEGG" id="wri:WRi_006250"/>
<dbReference type="HOGENOM" id="CLU_078938_4_1_5"/>
<dbReference type="Proteomes" id="UP000001293">
    <property type="component" value="Chromosome"/>
</dbReference>
<dbReference type="GO" id="GO:1990904">
    <property type="term" value="C:ribonucleoprotein complex"/>
    <property type="evidence" value="ECO:0007669"/>
    <property type="project" value="UniProtKB-KW"/>
</dbReference>
<dbReference type="GO" id="GO:0005840">
    <property type="term" value="C:ribosome"/>
    <property type="evidence" value="ECO:0007669"/>
    <property type="project" value="UniProtKB-KW"/>
</dbReference>
<dbReference type="GO" id="GO:0019843">
    <property type="term" value="F:rRNA binding"/>
    <property type="evidence" value="ECO:0007669"/>
    <property type="project" value="UniProtKB-UniRule"/>
</dbReference>
<dbReference type="GO" id="GO:0003735">
    <property type="term" value="F:structural constituent of ribosome"/>
    <property type="evidence" value="ECO:0007669"/>
    <property type="project" value="InterPro"/>
</dbReference>
<dbReference type="GO" id="GO:0006412">
    <property type="term" value="P:translation"/>
    <property type="evidence" value="ECO:0007669"/>
    <property type="project" value="UniProtKB-UniRule"/>
</dbReference>
<dbReference type="Gene3D" id="3.10.430.100">
    <property type="entry name" value="Ribosomal protein L9, C-terminal domain"/>
    <property type="match status" value="1"/>
</dbReference>
<dbReference type="Gene3D" id="3.40.5.10">
    <property type="entry name" value="Ribosomal protein L9, N-terminal domain"/>
    <property type="match status" value="1"/>
</dbReference>
<dbReference type="HAMAP" id="MF_00503">
    <property type="entry name" value="Ribosomal_bL9"/>
    <property type="match status" value="1"/>
</dbReference>
<dbReference type="InterPro" id="IPR000244">
    <property type="entry name" value="Ribosomal_bL9"/>
</dbReference>
<dbReference type="InterPro" id="IPR009027">
    <property type="entry name" value="Ribosomal_bL9/RNase_H1_N"/>
</dbReference>
<dbReference type="InterPro" id="IPR020594">
    <property type="entry name" value="Ribosomal_bL9_bac/chp"/>
</dbReference>
<dbReference type="InterPro" id="IPR020069">
    <property type="entry name" value="Ribosomal_bL9_C"/>
</dbReference>
<dbReference type="InterPro" id="IPR036791">
    <property type="entry name" value="Ribosomal_bL9_C_sf"/>
</dbReference>
<dbReference type="InterPro" id="IPR020070">
    <property type="entry name" value="Ribosomal_bL9_N"/>
</dbReference>
<dbReference type="InterPro" id="IPR036935">
    <property type="entry name" value="Ribosomal_bL9_N_sf"/>
</dbReference>
<dbReference type="NCBIfam" id="TIGR00158">
    <property type="entry name" value="L9"/>
    <property type="match status" value="1"/>
</dbReference>
<dbReference type="PANTHER" id="PTHR21368">
    <property type="entry name" value="50S RIBOSOMAL PROTEIN L9"/>
    <property type="match status" value="1"/>
</dbReference>
<dbReference type="Pfam" id="PF03948">
    <property type="entry name" value="Ribosomal_L9_C"/>
    <property type="match status" value="1"/>
</dbReference>
<dbReference type="Pfam" id="PF01281">
    <property type="entry name" value="Ribosomal_L9_N"/>
    <property type="match status" value="1"/>
</dbReference>
<dbReference type="SUPFAM" id="SSF55658">
    <property type="entry name" value="L9 N-domain-like"/>
    <property type="match status" value="1"/>
</dbReference>
<dbReference type="SUPFAM" id="SSF55653">
    <property type="entry name" value="Ribosomal protein L9 C-domain"/>
    <property type="match status" value="1"/>
</dbReference>
<dbReference type="PROSITE" id="PS00651">
    <property type="entry name" value="RIBOSOMAL_L9"/>
    <property type="match status" value="1"/>
</dbReference>
<protein>
    <recommendedName>
        <fullName evidence="1">Large ribosomal subunit protein bL9</fullName>
    </recommendedName>
    <alternativeName>
        <fullName evidence="3">50S ribosomal protein L9</fullName>
    </alternativeName>
</protein>
<organism>
    <name type="scientific">Wolbachia sp. subsp. Drosophila simulans (strain wRi)</name>
    <dbReference type="NCBI Taxonomy" id="66084"/>
    <lineage>
        <taxon>Bacteria</taxon>
        <taxon>Pseudomonadati</taxon>
        <taxon>Pseudomonadota</taxon>
        <taxon>Alphaproteobacteria</taxon>
        <taxon>Rickettsiales</taxon>
        <taxon>Anaplasmataceae</taxon>
        <taxon>Wolbachieae</taxon>
        <taxon>Wolbachia</taxon>
    </lineage>
</organism>
<accession>C0R3A4</accession>
<name>RL9_WOLWR</name>
<comment type="function">
    <text evidence="1">Binds to the 23S rRNA.</text>
</comment>
<comment type="similarity">
    <text evidence="1">Belongs to the bacterial ribosomal protein bL9 family.</text>
</comment>
<sequence>MLIILKENIRTLGKLGEVVKVKPGYARNFLFPQRKAVKATKENLTKLEEQRLLLEEENIKRLNVAKELALSLHDKFVVLIKQASEDGKIFGSVTTREIAKILLQEGHVIDHRSLSFGGISIKNLGEYQVNVELHSEVVVPITIYVVKSETDANELRQVKLQNQKSEQQEAEQDANKEAADGDDS</sequence>
<proteinExistence type="inferred from homology"/>